<reference key="1">
    <citation type="journal article" date="2019" name="Proc. Natl. Acad. Sci. U.S.A.">
        <title>Compartmentalized biosynthesis of mycophenolic acid.</title>
        <authorList>
            <person name="Zhang W."/>
            <person name="Du L."/>
            <person name="Qu Z."/>
            <person name="Zhang X."/>
            <person name="Li F."/>
            <person name="Li Z."/>
            <person name="Qi F."/>
            <person name="Wang X."/>
            <person name="Jiang Y."/>
            <person name="Men P."/>
            <person name="Sun J."/>
            <person name="Cao S."/>
            <person name="Geng C."/>
            <person name="Qi F."/>
            <person name="Wan X."/>
            <person name="Liu C."/>
            <person name="Li S."/>
        </authorList>
    </citation>
    <scope>NUCLEOTIDE SEQUENCE [MRNA]</scope>
    <scope>FUNCTION</scope>
    <scope>SUBCELLULAR LOCATION</scope>
    <scope>CATALYTIC ACTIVITY</scope>
    <scope>PATHWAY</scope>
</reference>
<name>AC891_PENBR</name>
<comment type="function">
    <text evidence="2 5">Acyl-CoA ligase involved in the biosynthesis of mycophenolic acid (MPA), the first isolated antibiotic natural product in the world obtained from a culture of Penicillium brevicompactum in 1893 (PubMed:31209052). The peroxisomal acyl-CoA ligase 891 converts the intermediate MFDHMP-3C into MFDHMP-3C-CoA which impairs its diffusion from the peroxisome (PubMed:31209052). The first step of the pathway is the synthesis of 5-methylorsellinic acid (5MOA) by the cytosolic polyketide synthase mpaC. 5MOA is then converted to the phthalide compound 5,7-dihydroxy-4,6-dimethylphthalide (DHMP) by the endoplasmic reticulum-bound cytochrome P450 monooxygenase mpaDE. MpaDE first catalyzes hydroxylation of 5-MOA to 4,6-dihydroxy-2-(hydroxymethyl)-3-methylbenzoic acid (DHMB). MpaDE then acts as a lactone synthase that catalyzes the ring closure to convert DHMB into DHMP. The next step is the prenylation of DHMP by the Golgi apparatus-associated prenyltransferase mpaA to yield farnesyl-DHMP (FDHMP). The ER-bound oxygenase mpaB then mediates the oxidative cleavage the C19-C20 double bond in FDHMP to yield FDHMP-3C via a mycophenolic aldehyde intermediate. The O-methyltransferase mpaG catalyzes the methylation of FDHMP-3C to yield MFDHMP-3C. After the cytosolic methylation of FDHMP-3C, MFDHMP-3C enters into peroxisomes probably via free diffusion due to its low molecular weight. Upon a peroxisomal CoA ligation reaction, catalyzed by a beta-oxidation component enzyme acyl-CoA ligase ACL891, MFDHMP-3C-CoA would then be restricted to peroxisomes for the following beta-oxidation pathway steps. The peroxisomal beta-oxidation machinery than converts MFDHMP-3C-CoA into MPA_CoA, via a beta-oxidation chain-shortening process. Finally mpaH acts as a peroxisomal acyl-CoA hydrolase with high substrate specificity toward MPA-CoA to release the final product MPA (Probable) (PubMed:31209052).</text>
</comment>
<comment type="catalytic activity">
    <reaction evidence="2">
        <text>(4E,8E)-10-(4-hydroxy-6-methoxy-7-methyl-3-oxo-1,3-dihydro-2-benzofuran-5-yl)-4,8-dimethyldeca-4,8-dienoate + ATP + CoA = (4E,8E)-10-(4-hydroxy-6-methoxy-7-methyl-3-oxo-1,3-dihydro-2-benzofuran-5-yl)-4,8-dimethyldeca-4,8-dienoyl-CoA + AMP + diphosphate</text>
        <dbReference type="Rhea" id="RHEA:66700"/>
        <dbReference type="ChEBI" id="CHEBI:30616"/>
        <dbReference type="ChEBI" id="CHEBI:33019"/>
        <dbReference type="ChEBI" id="CHEBI:57287"/>
        <dbReference type="ChEBI" id="CHEBI:167390"/>
        <dbReference type="ChEBI" id="CHEBI:167446"/>
        <dbReference type="ChEBI" id="CHEBI:456215"/>
    </reaction>
    <physiologicalReaction direction="left-to-right" evidence="2">
        <dbReference type="Rhea" id="RHEA:66701"/>
    </physiologicalReaction>
</comment>
<comment type="pathway">
    <text evidence="2">Secondary metabolite biosynthesis; terpenoid biosynthesis.</text>
</comment>
<comment type="subcellular location">
    <subcellularLocation>
        <location evidence="2">Peroxisome matrix</location>
    </subcellularLocation>
</comment>
<comment type="similarity">
    <text evidence="4">Belongs to the ATP-dependent AMP-binding enzyme family.</text>
</comment>
<proteinExistence type="evidence at protein level"/>
<evidence type="ECO:0000255" key="1"/>
<evidence type="ECO:0000269" key="2">
    <source>
    </source>
</evidence>
<evidence type="ECO:0000303" key="3">
    <source>
    </source>
</evidence>
<evidence type="ECO:0000305" key="4"/>
<evidence type="ECO:0000305" key="5">
    <source>
    </source>
</evidence>
<accession>P9WEY3</accession>
<keyword id="KW-0067">ATP-binding</keyword>
<keyword id="KW-0436">Ligase</keyword>
<keyword id="KW-0460">Magnesium</keyword>
<keyword id="KW-0547">Nucleotide-binding</keyword>
<keyword id="KW-0576">Peroxisome</keyword>
<organism>
    <name type="scientific">Penicillium brevicompactum</name>
    <dbReference type="NCBI Taxonomy" id="5074"/>
    <lineage>
        <taxon>Eukaryota</taxon>
        <taxon>Fungi</taxon>
        <taxon>Dikarya</taxon>
        <taxon>Ascomycota</taxon>
        <taxon>Pezizomycotina</taxon>
        <taxon>Eurotiomycetes</taxon>
        <taxon>Eurotiomycetidae</taxon>
        <taxon>Eurotiales</taxon>
        <taxon>Aspergillaceae</taxon>
        <taxon>Penicillium</taxon>
    </lineage>
</organism>
<protein>
    <recommendedName>
        <fullName evidence="3">Acyl-CoA ligase 891, peroxisomal</fullName>
        <shortName evidence="3">ACL891</shortName>
        <ecNumber evidence="2">6.2.1.-</ecNumber>
    </recommendedName>
</protein>
<feature type="chain" id="PRO_0000451896" description="Acyl-CoA ligase 891, peroxisomal">
    <location>
        <begin position="1"/>
        <end position="707"/>
    </location>
</feature>
<feature type="region of interest" description="Fatty acid-binding" evidence="1">
    <location>
        <begin position="525"/>
        <end position="549"/>
    </location>
</feature>
<feature type="short sequence motif" description="Peroxisome targeting signal" evidence="5">
    <location>
        <begin position="705"/>
        <end position="707"/>
    </location>
</feature>
<feature type="binding site" evidence="1">
    <location>
        <begin position="259"/>
        <end position="270"/>
    </location>
    <ligand>
        <name>ATP</name>
        <dbReference type="ChEBI" id="CHEBI:30616"/>
    </ligand>
</feature>
<sequence length="707" mass="78110">MFFTQPPHLVKAEELKQEPPKGTAYSVAIPGTEQPGRSRVYRAWNAQKELLTTLDPQVTTAHDMFESTANRQPKNHCLGWRPYNSTTKTWDPYQWLTYETVQKRRAAFGAGLVELHQKHNCHRPGQYGVGLWAQNRPEWQITDLACISQSLYSVSIYDVLAPDATEYIINHAELNCVVTSLPHIPTLLKLKSSLPNLKMIVSLDPLDGPEQNGHSKRALLESMAAGLDLAIYTIDQVEELGLASKRGYNAPSASDIVTINYTSGTTGPPKGVVLTHGNAVAATSCGLTTIGQARGDTMCSYLPLAHIYARLAEHTAFWGGARIGYFHGNIVELVDDLKLLKPTGFMSVPRLYSRFGTAIRAATVEQPGFKGALSRHIVAAKMANMKNPDPSKATIKHALYDRIWAKKVAAALGLERAKYMISGSAPLDPTLHNFLRVATGTDVVQGYGLTESYASATAQSTQDLSSGNCGRLAPCTEACLVSLPDMEYSVEDKPFPRGELLLRGNNMFREYYKNDDETSKAVTEDGWFRTGDVCTVDAQGRFIIIDRRKNVLKLAQGEYISPERLEGVILSELGYVAQAYVHGDSSETFLVGIFGVAPDLFAPYASKVLGKTIAPTDVEGLKEHLNDDKLRRAVLRDLERVAKKHKFAGYERVRNVSLKVDPFTVENNLLTPTLKLKRPPVVKMYRTLLDQLYGQANEEQSAPRAKL</sequence>
<dbReference type="EC" id="6.2.1.-" evidence="2"/>
<dbReference type="RefSeq" id="XP_056805907.1">
    <property type="nucleotide sequence ID" value="XM_056961373.1"/>
</dbReference>
<dbReference type="SMR" id="P9WEY3"/>
<dbReference type="GeneID" id="81651630"/>
<dbReference type="OrthoDB" id="1700726at2759"/>
<dbReference type="UniPathway" id="UPA00213"/>
<dbReference type="GO" id="GO:0005783">
    <property type="term" value="C:endoplasmic reticulum"/>
    <property type="evidence" value="ECO:0007669"/>
    <property type="project" value="TreeGrafter"/>
</dbReference>
<dbReference type="GO" id="GO:0016020">
    <property type="term" value="C:membrane"/>
    <property type="evidence" value="ECO:0007669"/>
    <property type="project" value="TreeGrafter"/>
</dbReference>
<dbReference type="GO" id="GO:0005782">
    <property type="term" value="C:peroxisomal matrix"/>
    <property type="evidence" value="ECO:0000314"/>
    <property type="project" value="GO_Central"/>
</dbReference>
<dbReference type="GO" id="GO:0005524">
    <property type="term" value="F:ATP binding"/>
    <property type="evidence" value="ECO:0007669"/>
    <property type="project" value="UniProtKB-KW"/>
</dbReference>
<dbReference type="GO" id="GO:0016405">
    <property type="term" value="F:CoA-ligase activity"/>
    <property type="evidence" value="ECO:0000314"/>
    <property type="project" value="UniProt"/>
</dbReference>
<dbReference type="GO" id="GO:0016874">
    <property type="term" value="F:ligase activity"/>
    <property type="evidence" value="ECO:0000314"/>
    <property type="project" value="GO_Central"/>
</dbReference>
<dbReference type="GO" id="GO:0004467">
    <property type="term" value="F:long-chain fatty acid-CoA ligase activity"/>
    <property type="evidence" value="ECO:0007669"/>
    <property type="project" value="TreeGrafter"/>
</dbReference>
<dbReference type="GO" id="GO:0016218">
    <property type="term" value="F:polyketide synthase activity"/>
    <property type="evidence" value="ECO:0000314"/>
    <property type="project" value="UniProt"/>
</dbReference>
<dbReference type="GO" id="GO:0140722">
    <property type="term" value="P:mycophenolic acid biosynthetic process"/>
    <property type="evidence" value="ECO:0000314"/>
    <property type="project" value="GO_Central"/>
</dbReference>
<dbReference type="GO" id="GO:0016114">
    <property type="term" value="P:terpenoid biosynthetic process"/>
    <property type="evidence" value="ECO:0007669"/>
    <property type="project" value="UniProtKB-UniPathway"/>
</dbReference>
<dbReference type="Gene3D" id="3.40.50.12780">
    <property type="entry name" value="N-terminal domain of ligase-like"/>
    <property type="match status" value="1"/>
</dbReference>
<dbReference type="InterPro" id="IPR020845">
    <property type="entry name" value="AMP-binding_CS"/>
</dbReference>
<dbReference type="InterPro" id="IPR000873">
    <property type="entry name" value="AMP-dep_synth/lig_dom"/>
</dbReference>
<dbReference type="InterPro" id="IPR042099">
    <property type="entry name" value="ANL_N_sf"/>
</dbReference>
<dbReference type="PANTHER" id="PTHR43272:SF33">
    <property type="entry name" value="AMP-BINDING DOMAIN-CONTAINING PROTEIN-RELATED"/>
    <property type="match status" value="1"/>
</dbReference>
<dbReference type="PANTHER" id="PTHR43272">
    <property type="entry name" value="LONG-CHAIN-FATTY-ACID--COA LIGASE"/>
    <property type="match status" value="1"/>
</dbReference>
<dbReference type="Pfam" id="PF00501">
    <property type="entry name" value="AMP-binding"/>
    <property type="match status" value="1"/>
</dbReference>
<dbReference type="SUPFAM" id="SSF56801">
    <property type="entry name" value="Acetyl-CoA synthetase-like"/>
    <property type="match status" value="1"/>
</dbReference>
<dbReference type="PROSITE" id="PS00455">
    <property type="entry name" value="AMP_BINDING"/>
    <property type="match status" value="1"/>
</dbReference>